<accession>O07578</accession>
<accession>Q796X5</accession>
<comment type="cofactor">
    <cofactor evidence="1">
        <name>pyridoxal 5'-phosphate</name>
        <dbReference type="ChEBI" id="CHEBI:597326"/>
    </cofactor>
</comment>
<comment type="similarity">
    <text evidence="3">In the C-terminal section; belongs to the class-I pyridoxal-phosphate-dependent aminotransferase family.</text>
</comment>
<feature type="chain" id="PRO_0000360698" description="Uncharacterized HTH-type transcriptional regulator YhdI">
    <location>
        <begin position="1"/>
        <end position="469"/>
    </location>
</feature>
<feature type="domain" description="HTH gntR-type" evidence="2">
    <location>
        <begin position="13"/>
        <end position="81"/>
    </location>
</feature>
<feature type="DNA-binding region" description="H-T-H motif" evidence="2">
    <location>
        <begin position="41"/>
        <end position="60"/>
    </location>
</feature>
<feature type="modified residue" description="N6-(pyridoxal phosphate)lysine" evidence="1">
    <location>
        <position position="309"/>
    </location>
</feature>
<name>YHDI_BACSU</name>
<organism>
    <name type="scientific">Bacillus subtilis (strain 168)</name>
    <dbReference type="NCBI Taxonomy" id="224308"/>
    <lineage>
        <taxon>Bacteria</taxon>
        <taxon>Bacillati</taxon>
        <taxon>Bacillota</taxon>
        <taxon>Bacilli</taxon>
        <taxon>Bacillales</taxon>
        <taxon>Bacillaceae</taxon>
        <taxon>Bacillus</taxon>
    </lineage>
</organism>
<sequence length="469" mass="52764">MDITPFLDKKSKTPLYEQLYTFFKQEISHARITKGTRLPSKRRLSSLLDVSTATIERAYEQLTAEGYVKSKPKIGWFAAEVEPGFPTAPDHFQQSVQPGLHQKNAPAIDFHQGSVDPTLFPFNAWRKSIVKSLDRYSGSFHTSGDPQGEYELRHMIARFVRLSRGVNCEPGQIIIGAGTTVLLQNLCLSLKPGTKIGFEEPGFHRSRRMFEANHMDVTPICSDAEGVLPDELYRQNPYLMYTTPSHQFPIGTIMTITRRQELLAWAAETNSFIIEDDYDGEFRYSGHPIPSLQGLDPNGRVIYLGTFSKSLLPSLRLSFMIVPPELMEPIQNNVQLMKQTVSAHSQLALADFIETGEWQKHINRMRSLYRKKHAVLLEAIRSELGNTVEILGKNSGLHILLRLLFPASEEEAIQAAADHGVTLYPVSPSYIEQTPFTSVLIGYGGLSEEDIRLGIQKLKTAWAPLISSY</sequence>
<proteinExistence type="inferred from homology"/>
<dbReference type="EMBL" id="Y14082">
    <property type="protein sequence ID" value="CAA74493.1"/>
    <property type="molecule type" value="Genomic_DNA"/>
</dbReference>
<dbReference type="EMBL" id="AL009126">
    <property type="protein sequence ID" value="CAB12787.1"/>
    <property type="molecule type" value="Genomic_DNA"/>
</dbReference>
<dbReference type="PIR" id="G69825">
    <property type="entry name" value="G69825"/>
</dbReference>
<dbReference type="RefSeq" id="NP_388829.1">
    <property type="nucleotide sequence ID" value="NC_000964.3"/>
</dbReference>
<dbReference type="RefSeq" id="WP_003245209.1">
    <property type="nucleotide sequence ID" value="NZ_OZ025638.1"/>
</dbReference>
<dbReference type="SMR" id="O07578"/>
<dbReference type="FunCoup" id="O07578">
    <property type="interactions" value="157"/>
</dbReference>
<dbReference type="STRING" id="224308.BSU09480"/>
<dbReference type="PaxDb" id="224308-BSU09480"/>
<dbReference type="EnsemblBacteria" id="CAB12787">
    <property type="protein sequence ID" value="CAB12787"/>
    <property type="gene ID" value="BSU_09480"/>
</dbReference>
<dbReference type="GeneID" id="939277"/>
<dbReference type="KEGG" id="bsu:BSU09480"/>
<dbReference type="PATRIC" id="fig|224308.179.peg.1021"/>
<dbReference type="eggNOG" id="COG1167">
    <property type="taxonomic scope" value="Bacteria"/>
</dbReference>
<dbReference type="InParanoid" id="O07578"/>
<dbReference type="OrthoDB" id="9808770at2"/>
<dbReference type="PhylomeDB" id="O07578"/>
<dbReference type="BioCyc" id="BSUB:BSU09480-MONOMER"/>
<dbReference type="Proteomes" id="UP000001570">
    <property type="component" value="Chromosome"/>
</dbReference>
<dbReference type="GO" id="GO:0003677">
    <property type="term" value="F:DNA binding"/>
    <property type="evidence" value="ECO:0007669"/>
    <property type="project" value="UniProtKB-KW"/>
</dbReference>
<dbReference type="GO" id="GO:0003700">
    <property type="term" value="F:DNA-binding transcription factor activity"/>
    <property type="evidence" value="ECO:0007669"/>
    <property type="project" value="InterPro"/>
</dbReference>
<dbReference type="GO" id="GO:0030170">
    <property type="term" value="F:pyridoxal phosphate binding"/>
    <property type="evidence" value="ECO:0007669"/>
    <property type="project" value="InterPro"/>
</dbReference>
<dbReference type="GO" id="GO:0008483">
    <property type="term" value="F:transaminase activity"/>
    <property type="evidence" value="ECO:0007669"/>
    <property type="project" value="UniProtKB-KW"/>
</dbReference>
<dbReference type="GO" id="GO:0009058">
    <property type="term" value="P:biosynthetic process"/>
    <property type="evidence" value="ECO:0007669"/>
    <property type="project" value="InterPro"/>
</dbReference>
<dbReference type="CDD" id="cd00609">
    <property type="entry name" value="AAT_like"/>
    <property type="match status" value="1"/>
</dbReference>
<dbReference type="CDD" id="cd07377">
    <property type="entry name" value="WHTH_GntR"/>
    <property type="match status" value="1"/>
</dbReference>
<dbReference type="Gene3D" id="3.40.640.10">
    <property type="entry name" value="Type I PLP-dependent aspartate aminotransferase-like (Major domain)"/>
    <property type="match status" value="1"/>
</dbReference>
<dbReference type="Gene3D" id="1.10.10.10">
    <property type="entry name" value="Winged helix-like DNA-binding domain superfamily/Winged helix DNA-binding domain"/>
    <property type="match status" value="1"/>
</dbReference>
<dbReference type="InterPro" id="IPR004839">
    <property type="entry name" value="Aminotransferase_I/II_large"/>
</dbReference>
<dbReference type="InterPro" id="IPR051446">
    <property type="entry name" value="HTH_trans_reg/aminotransferase"/>
</dbReference>
<dbReference type="InterPro" id="IPR015424">
    <property type="entry name" value="PyrdxlP-dep_Trfase"/>
</dbReference>
<dbReference type="InterPro" id="IPR015421">
    <property type="entry name" value="PyrdxlP-dep_Trfase_major"/>
</dbReference>
<dbReference type="InterPro" id="IPR000524">
    <property type="entry name" value="Tscrpt_reg_HTH_GntR"/>
</dbReference>
<dbReference type="InterPro" id="IPR036388">
    <property type="entry name" value="WH-like_DNA-bd_sf"/>
</dbReference>
<dbReference type="InterPro" id="IPR036390">
    <property type="entry name" value="WH_DNA-bd_sf"/>
</dbReference>
<dbReference type="PANTHER" id="PTHR46577">
    <property type="entry name" value="HTH-TYPE TRANSCRIPTIONAL REGULATORY PROTEIN GABR"/>
    <property type="match status" value="1"/>
</dbReference>
<dbReference type="PANTHER" id="PTHR46577:SF1">
    <property type="entry name" value="HTH-TYPE TRANSCRIPTIONAL REGULATORY PROTEIN GABR"/>
    <property type="match status" value="1"/>
</dbReference>
<dbReference type="Pfam" id="PF00155">
    <property type="entry name" value="Aminotran_1_2"/>
    <property type="match status" value="1"/>
</dbReference>
<dbReference type="Pfam" id="PF00392">
    <property type="entry name" value="GntR"/>
    <property type="match status" value="1"/>
</dbReference>
<dbReference type="SMART" id="SM00345">
    <property type="entry name" value="HTH_GNTR"/>
    <property type="match status" value="1"/>
</dbReference>
<dbReference type="SUPFAM" id="SSF53383">
    <property type="entry name" value="PLP-dependent transferases"/>
    <property type="match status" value="1"/>
</dbReference>
<dbReference type="SUPFAM" id="SSF46785">
    <property type="entry name" value="Winged helix' DNA-binding domain"/>
    <property type="match status" value="1"/>
</dbReference>
<dbReference type="PROSITE" id="PS50949">
    <property type="entry name" value="HTH_GNTR"/>
    <property type="match status" value="1"/>
</dbReference>
<keyword id="KW-0032">Aminotransferase</keyword>
<keyword id="KW-0238">DNA-binding</keyword>
<keyword id="KW-0663">Pyridoxal phosphate</keyword>
<keyword id="KW-1185">Reference proteome</keyword>
<keyword id="KW-0804">Transcription</keyword>
<keyword id="KW-0805">Transcription regulation</keyword>
<keyword id="KW-0808">Transferase</keyword>
<gene>
    <name type="primary">yhdI</name>
    <name type="ordered locus">BSU09480</name>
</gene>
<reference key="1">
    <citation type="journal article" date="1998" name="Microbiology">
        <title>The 172 kb prkA-addAB region from 83 degrees to 97 degrees of the Bacillus subtilis chromosome contains several dysfunctional genes, the glyB marker, many genes encoding transporter proteins, and the ubiquitous hit gene.</title>
        <authorList>
            <person name="Noback M.A."/>
            <person name="Holsappel S."/>
            <person name="Kiewiet R."/>
            <person name="Terpstra P."/>
            <person name="Wambutt R."/>
            <person name="Wedler H."/>
            <person name="Venema G."/>
            <person name="Bron S."/>
        </authorList>
    </citation>
    <scope>NUCLEOTIDE SEQUENCE [GENOMIC DNA]</scope>
    <source>
        <strain>168</strain>
    </source>
</reference>
<reference key="2">
    <citation type="journal article" date="1997" name="Nature">
        <title>The complete genome sequence of the Gram-positive bacterium Bacillus subtilis.</title>
        <authorList>
            <person name="Kunst F."/>
            <person name="Ogasawara N."/>
            <person name="Moszer I."/>
            <person name="Albertini A.M."/>
            <person name="Alloni G."/>
            <person name="Azevedo V."/>
            <person name="Bertero M.G."/>
            <person name="Bessieres P."/>
            <person name="Bolotin A."/>
            <person name="Borchert S."/>
            <person name="Borriss R."/>
            <person name="Boursier L."/>
            <person name="Brans A."/>
            <person name="Braun M."/>
            <person name="Brignell S.C."/>
            <person name="Bron S."/>
            <person name="Brouillet S."/>
            <person name="Bruschi C.V."/>
            <person name="Caldwell B."/>
            <person name="Capuano V."/>
            <person name="Carter N.M."/>
            <person name="Choi S.-K."/>
            <person name="Codani J.-J."/>
            <person name="Connerton I.F."/>
            <person name="Cummings N.J."/>
            <person name="Daniel R.A."/>
            <person name="Denizot F."/>
            <person name="Devine K.M."/>
            <person name="Duesterhoeft A."/>
            <person name="Ehrlich S.D."/>
            <person name="Emmerson P.T."/>
            <person name="Entian K.-D."/>
            <person name="Errington J."/>
            <person name="Fabret C."/>
            <person name="Ferrari E."/>
            <person name="Foulger D."/>
            <person name="Fritz C."/>
            <person name="Fujita M."/>
            <person name="Fujita Y."/>
            <person name="Fuma S."/>
            <person name="Galizzi A."/>
            <person name="Galleron N."/>
            <person name="Ghim S.-Y."/>
            <person name="Glaser P."/>
            <person name="Goffeau A."/>
            <person name="Golightly E.J."/>
            <person name="Grandi G."/>
            <person name="Guiseppi G."/>
            <person name="Guy B.J."/>
            <person name="Haga K."/>
            <person name="Haiech J."/>
            <person name="Harwood C.R."/>
            <person name="Henaut A."/>
            <person name="Hilbert H."/>
            <person name="Holsappel S."/>
            <person name="Hosono S."/>
            <person name="Hullo M.-F."/>
            <person name="Itaya M."/>
            <person name="Jones L.-M."/>
            <person name="Joris B."/>
            <person name="Karamata D."/>
            <person name="Kasahara Y."/>
            <person name="Klaerr-Blanchard M."/>
            <person name="Klein C."/>
            <person name="Kobayashi Y."/>
            <person name="Koetter P."/>
            <person name="Koningstein G."/>
            <person name="Krogh S."/>
            <person name="Kumano M."/>
            <person name="Kurita K."/>
            <person name="Lapidus A."/>
            <person name="Lardinois S."/>
            <person name="Lauber J."/>
            <person name="Lazarevic V."/>
            <person name="Lee S.-M."/>
            <person name="Levine A."/>
            <person name="Liu H."/>
            <person name="Masuda S."/>
            <person name="Mauel C."/>
            <person name="Medigue C."/>
            <person name="Medina N."/>
            <person name="Mellado R.P."/>
            <person name="Mizuno M."/>
            <person name="Moestl D."/>
            <person name="Nakai S."/>
            <person name="Noback M."/>
            <person name="Noone D."/>
            <person name="O'Reilly M."/>
            <person name="Ogawa K."/>
            <person name="Ogiwara A."/>
            <person name="Oudega B."/>
            <person name="Park S.-H."/>
            <person name="Parro V."/>
            <person name="Pohl T.M."/>
            <person name="Portetelle D."/>
            <person name="Porwollik S."/>
            <person name="Prescott A.M."/>
            <person name="Presecan E."/>
            <person name="Pujic P."/>
            <person name="Purnelle B."/>
            <person name="Rapoport G."/>
            <person name="Rey M."/>
            <person name="Reynolds S."/>
            <person name="Rieger M."/>
            <person name="Rivolta C."/>
            <person name="Rocha E."/>
            <person name="Roche B."/>
            <person name="Rose M."/>
            <person name="Sadaie Y."/>
            <person name="Sato T."/>
            <person name="Scanlan E."/>
            <person name="Schleich S."/>
            <person name="Schroeter R."/>
            <person name="Scoffone F."/>
            <person name="Sekiguchi J."/>
            <person name="Sekowska A."/>
            <person name="Seror S.J."/>
            <person name="Serror P."/>
            <person name="Shin B.-S."/>
            <person name="Soldo B."/>
            <person name="Sorokin A."/>
            <person name="Tacconi E."/>
            <person name="Takagi T."/>
            <person name="Takahashi H."/>
            <person name="Takemaru K."/>
            <person name="Takeuchi M."/>
            <person name="Tamakoshi A."/>
            <person name="Tanaka T."/>
            <person name="Terpstra P."/>
            <person name="Tognoni A."/>
            <person name="Tosato V."/>
            <person name="Uchiyama S."/>
            <person name="Vandenbol M."/>
            <person name="Vannier F."/>
            <person name="Vassarotti A."/>
            <person name="Viari A."/>
            <person name="Wambutt R."/>
            <person name="Wedler E."/>
            <person name="Wedler H."/>
            <person name="Weitzenegger T."/>
            <person name="Winters P."/>
            <person name="Wipat A."/>
            <person name="Yamamoto H."/>
            <person name="Yamane K."/>
            <person name="Yasumoto K."/>
            <person name="Yata K."/>
            <person name="Yoshida K."/>
            <person name="Yoshikawa H.-F."/>
            <person name="Zumstein E."/>
            <person name="Yoshikawa H."/>
            <person name="Danchin A."/>
        </authorList>
    </citation>
    <scope>NUCLEOTIDE SEQUENCE [LARGE SCALE GENOMIC DNA]</scope>
    <source>
        <strain>168</strain>
    </source>
</reference>
<reference key="3">
    <citation type="journal article" date="2002" name="Mol. Microbiol.">
        <title>GabR, a member of a novel protein family, regulates the utilization of gamma-aminobutyrate in Bacillus subtilis.</title>
        <authorList>
            <person name="Belitsky B.R."/>
            <person name="Sonenshein A.L."/>
        </authorList>
    </citation>
    <scope>GENE FAMILY</scope>
</reference>
<protein>
    <recommendedName>
        <fullName>Uncharacterized HTH-type transcriptional regulator YhdI</fullName>
    </recommendedName>
</protein>
<evidence type="ECO:0000250" key="1"/>
<evidence type="ECO:0000255" key="2">
    <source>
        <dbReference type="PROSITE-ProRule" id="PRU00307"/>
    </source>
</evidence>
<evidence type="ECO:0000305" key="3"/>